<keyword id="KW-0548">Nucleotidyltransferase</keyword>
<keyword id="KW-1185">Reference proteome</keyword>
<keyword id="KW-0694">RNA-binding</keyword>
<keyword id="KW-0698">rRNA processing</keyword>
<keyword id="KW-0808">Transferase</keyword>
<keyword id="KW-0819">tRNA processing</keyword>
<keyword id="KW-0820">tRNA-binding</keyword>
<comment type="function">
    <text evidence="1">Phosphorolytic 3'-5' exoribonuclease that plays an important role in tRNA 3'-end maturation. Removes nucleotide residues following the 3'-CCA terminus of tRNAs; can also add nucleotides to the ends of RNA molecules by using nucleoside diphosphates as substrates, but this may not be physiologically important. Probably plays a role in initiation of 16S rRNA degradation (leading to ribosome degradation) during starvation.</text>
</comment>
<comment type="catalytic activity">
    <reaction evidence="1">
        <text>tRNA(n+1) + phosphate = tRNA(n) + a ribonucleoside 5'-diphosphate</text>
        <dbReference type="Rhea" id="RHEA:10628"/>
        <dbReference type="Rhea" id="RHEA-COMP:17343"/>
        <dbReference type="Rhea" id="RHEA-COMP:17344"/>
        <dbReference type="ChEBI" id="CHEBI:43474"/>
        <dbReference type="ChEBI" id="CHEBI:57930"/>
        <dbReference type="ChEBI" id="CHEBI:173114"/>
        <dbReference type="EC" id="2.7.7.56"/>
    </reaction>
</comment>
<comment type="subunit">
    <text evidence="1">Homohexameric ring arranged as a trimer of dimers.</text>
</comment>
<comment type="similarity">
    <text evidence="1">Belongs to the RNase PH family.</text>
</comment>
<feature type="chain" id="PRO_1000024838" description="Ribonuclease PH">
    <location>
        <begin position="1"/>
        <end position="242"/>
    </location>
</feature>
<feature type="binding site" evidence="1">
    <location>
        <position position="89"/>
    </location>
    <ligand>
        <name>phosphate</name>
        <dbReference type="ChEBI" id="CHEBI:43474"/>
        <note>substrate</note>
    </ligand>
</feature>
<feature type="binding site" evidence="1">
    <location>
        <begin position="127"/>
        <end position="129"/>
    </location>
    <ligand>
        <name>phosphate</name>
        <dbReference type="ChEBI" id="CHEBI:43474"/>
        <note>substrate</note>
    </ligand>
</feature>
<organism>
    <name type="scientific">Neisseria gonorrhoeae (strain ATCC 700825 / FA 1090)</name>
    <dbReference type="NCBI Taxonomy" id="242231"/>
    <lineage>
        <taxon>Bacteria</taxon>
        <taxon>Pseudomonadati</taxon>
        <taxon>Pseudomonadota</taxon>
        <taxon>Betaproteobacteria</taxon>
        <taxon>Neisseriales</taxon>
        <taxon>Neisseriaceae</taxon>
        <taxon>Neisseria</taxon>
    </lineage>
</organism>
<evidence type="ECO:0000255" key="1">
    <source>
        <dbReference type="HAMAP-Rule" id="MF_00564"/>
    </source>
</evidence>
<accession>Q5F840</accession>
<gene>
    <name evidence="1" type="primary">rph</name>
    <name type="ordered locus">NGO_0958</name>
</gene>
<reference key="1">
    <citation type="submission" date="2003-03" db="EMBL/GenBank/DDBJ databases">
        <title>The complete genome sequence of Neisseria gonorrhoeae.</title>
        <authorList>
            <person name="Lewis L.A."/>
            <person name="Gillaspy A.F."/>
            <person name="McLaughlin R.E."/>
            <person name="Gipson M."/>
            <person name="Ducey T.F."/>
            <person name="Ownbey T."/>
            <person name="Hartman K."/>
            <person name="Nydick C."/>
            <person name="Carson M.B."/>
            <person name="Vaughn J."/>
            <person name="Thomson C."/>
            <person name="Song L."/>
            <person name="Lin S."/>
            <person name="Yuan X."/>
            <person name="Najar F."/>
            <person name="Zhan M."/>
            <person name="Ren Q."/>
            <person name="Zhu H."/>
            <person name="Qi S."/>
            <person name="Kenton S.M."/>
            <person name="Lai H."/>
            <person name="White J.D."/>
            <person name="Clifton S."/>
            <person name="Roe B.A."/>
            <person name="Dyer D.W."/>
        </authorList>
    </citation>
    <scope>NUCLEOTIDE SEQUENCE [LARGE SCALE GENOMIC DNA]</scope>
    <source>
        <strain>ATCC 700825 / FA 1090</strain>
    </source>
</reference>
<proteinExistence type="inferred from homology"/>
<name>RNPH_NEIG1</name>
<protein>
    <recommendedName>
        <fullName evidence="1">Ribonuclease PH</fullName>
        <shortName evidence="1">RNase PH</shortName>
        <ecNumber evidence="1">2.7.7.56</ecNumber>
    </recommendedName>
    <alternativeName>
        <fullName evidence="1">tRNA nucleotidyltransferase</fullName>
    </alternativeName>
</protein>
<sequence length="242" mass="25646">MPDYIRTSRAADSLRDIKITPHFLPHTDGSCLIECGNTKVICTASVDENAPPFLHGKNQGWVTAEYGMLPASTALRMRREASAGKQSGRTQEIQRLIGRSLRAVVDMEKLGERQILIDCDVIQADGGTRTASITGAFVALQIAVGKLVSDGILSENPILEAVAAVSAGVVNGVPLLDLDYPEDSGCDSDVNIVMTASGKIIEIQGTAEGAPFSLDELGKLVALAQKGIGELLRYQQNALSVA</sequence>
<dbReference type="EC" id="2.7.7.56" evidence="1"/>
<dbReference type="EMBL" id="AE004969">
    <property type="protein sequence ID" value="AAW89647.1"/>
    <property type="molecule type" value="Genomic_DNA"/>
</dbReference>
<dbReference type="RefSeq" id="WP_003688342.1">
    <property type="nucleotide sequence ID" value="NC_002946.2"/>
</dbReference>
<dbReference type="RefSeq" id="YP_208059.1">
    <property type="nucleotide sequence ID" value="NC_002946.2"/>
</dbReference>
<dbReference type="SMR" id="Q5F840"/>
<dbReference type="STRING" id="242231.NGO_0958"/>
<dbReference type="GeneID" id="66753281"/>
<dbReference type="KEGG" id="ngo:NGO_0958"/>
<dbReference type="PATRIC" id="fig|242231.10.peg.1120"/>
<dbReference type="HOGENOM" id="CLU_050858_0_0_4"/>
<dbReference type="Proteomes" id="UP000000535">
    <property type="component" value="Chromosome"/>
</dbReference>
<dbReference type="GO" id="GO:0000175">
    <property type="term" value="F:3'-5'-RNA exonuclease activity"/>
    <property type="evidence" value="ECO:0007669"/>
    <property type="project" value="UniProtKB-UniRule"/>
</dbReference>
<dbReference type="GO" id="GO:0000049">
    <property type="term" value="F:tRNA binding"/>
    <property type="evidence" value="ECO:0007669"/>
    <property type="project" value="UniProtKB-UniRule"/>
</dbReference>
<dbReference type="GO" id="GO:0009022">
    <property type="term" value="F:tRNA nucleotidyltransferase activity"/>
    <property type="evidence" value="ECO:0007669"/>
    <property type="project" value="UniProtKB-UniRule"/>
</dbReference>
<dbReference type="GO" id="GO:0016075">
    <property type="term" value="P:rRNA catabolic process"/>
    <property type="evidence" value="ECO:0007669"/>
    <property type="project" value="UniProtKB-UniRule"/>
</dbReference>
<dbReference type="GO" id="GO:0006364">
    <property type="term" value="P:rRNA processing"/>
    <property type="evidence" value="ECO:0007669"/>
    <property type="project" value="UniProtKB-KW"/>
</dbReference>
<dbReference type="GO" id="GO:0008033">
    <property type="term" value="P:tRNA processing"/>
    <property type="evidence" value="ECO:0007669"/>
    <property type="project" value="UniProtKB-UniRule"/>
</dbReference>
<dbReference type="CDD" id="cd11362">
    <property type="entry name" value="RNase_PH_bact"/>
    <property type="match status" value="1"/>
</dbReference>
<dbReference type="FunFam" id="3.30.230.70:FF:000003">
    <property type="entry name" value="Ribonuclease PH"/>
    <property type="match status" value="1"/>
</dbReference>
<dbReference type="Gene3D" id="3.30.230.70">
    <property type="entry name" value="GHMP Kinase, N-terminal domain"/>
    <property type="match status" value="1"/>
</dbReference>
<dbReference type="HAMAP" id="MF_00564">
    <property type="entry name" value="RNase_PH"/>
    <property type="match status" value="1"/>
</dbReference>
<dbReference type="InterPro" id="IPR001247">
    <property type="entry name" value="ExoRNase_PH_dom1"/>
</dbReference>
<dbReference type="InterPro" id="IPR015847">
    <property type="entry name" value="ExoRNase_PH_dom2"/>
</dbReference>
<dbReference type="InterPro" id="IPR036345">
    <property type="entry name" value="ExoRNase_PH_dom2_sf"/>
</dbReference>
<dbReference type="InterPro" id="IPR027408">
    <property type="entry name" value="PNPase/RNase_PH_dom_sf"/>
</dbReference>
<dbReference type="InterPro" id="IPR020568">
    <property type="entry name" value="Ribosomal_Su5_D2-typ_SF"/>
</dbReference>
<dbReference type="InterPro" id="IPR050080">
    <property type="entry name" value="RNase_PH"/>
</dbReference>
<dbReference type="InterPro" id="IPR002381">
    <property type="entry name" value="RNase_PH_bac-type"/>
</dbReference>
<dbReference type="InterPro" id="IPR018336">
    <property type="entry name" value="RNase_PH_CS"/>
</dbReference>
<dbReference type="NCBIfam" id="TIGR01966">
    <property type="entry name" value="RNasePH"/>
    <property type="match status" value="1"/>
</dbReference>
<dbReference type="PANTHER" id="PTHR11953">
    <property type="entry name" value="EXOSOME COMPLEX COMPONENT"/>
    <property type="match status" value="1"/>
</dbReference>
<dbReference type="PANTHER" id="PTHR11953:SF0">
    <property type="entry name" value="EXOSOME COMPLEX COMPONENT RRP41"/>
    <property type="match status" value="1"/>
</dbReference>
<dbReference type="Pfam" id="PF01138">
    <property type="entry name" value="RNase_PH"/>
    <property type="match status" value="1"/>
</dbReference>
<dbReference type="Pfam" id="PF03725">
    <property type="entry name" value="RNase_PH_C"/>
    <property type="match status" value="1"/>
</dbReference>
<dbReference type="SUPFAM" id="SSF55666">
    <property type="entry name" value="Ribonuclease PH domain 2-like"/>
    <property type="match status" value="1"/>
</dbReference>
<dbReference type="SUPFAM" id="SSF54211">
    <property type="entry name" value="Ribosomal protein S5 domain 2-like"/>
    <property type="match status" value="1"/>
</dbReference>
<dbReference type="PROSITE" id="PS01277">
    <property type="entry name" value="RIBONUCLEASE_PH"/>
    <property type="match status" value="1"/>
</dbReference>